<evidence type="ECO:0000255" key="1">
    <source>
        <dbReference type="HAMAP-Rule" id="MF_00302"/>
    </source>
</evidence>
<sequence length="106" mass="12305">MGKNNDWLNFEHLVKDKQIEALQPPSMYKVILNNDDYTPMEFVIDVLQKFFSYDIERATQLMLNVHYQGKAICGVFTAEVAETKVAHVNQYARENEHPLLCTLEKA</sequence>
<gene>
    <name evidence="1" type="primary">clpS</name>
    <name type="ordered locus">YPDSF_2328</name>
</gene>
<dbReference type="EMBL" id="CP000668">
    <property type="protein sequence ID" value="ABP40703.1"/>
    <property type="molecule type" value="Genomic_DNA"/>
</dbReference>
<dbReference type="RefSeq" id="WP_002211349.1">
    <property type="nucleotide sequence ID" value="NZ_CP009715.1"/>
</dbReference>
<dbReference type="SMR" id="A4TN41"/>
<dbReference type="GeneID" id="96664964"/>
<dbReference type="KEGG" id="ypp:YPDSF_2328"/>
<dbReference type="PATRIC" id="fig|386656.14.peg.3825"/>
<dbReference type="GO" id="GO:0030163">
    <property type="term" value="P:protein catabolic process"/>
    <property type="evidence" value="ECO:0007669"/>
    <property type="project" value="InterPro"/>
</dbReference>
<dbReference type="GO" id="GO:0006508">
    <property type="term" value="P:proteolysis"/>
    <property type="evidence" value="ECO:0007669"/>
    <property type="project" value="UniProtKB-UniRule"/>
</dbReference>
<dbReference type="FunFam" id="3.30.1390.10:FF:000002">
    <property type="entry name" value="ATP-dependent Clp protease adapter protein ClpS"/>
    <property type="match status" value="1"/>
</dbReference>
<dbReference type="Gene3D" id="3.30.1390.10">
    <property type="match status" value="1"/>
</dbReference>
<dbReference type="HAMAP" id="MF_00302">
    <property type="entry name" value="ClpS"/>
    <property type="match status" value="1"/>
</dbReference>
<dbReference type="InterPro" id="IPR022935">
    <property type="entry name" value="ClpS"/>
</dbReference>
<dbReference type="InterPro" id="IPR003769">
    <property type="entry name" value="ClpS_core"/>
</dbReference>
<dbReference type="InterPro" id="IPR014719">
    <property type="entry name" value="Ribosomal_bL12_C/ClpS-like"/>
</dbReference>
<dbReference type="NCBIfam" id="NF000670">
    <property type="entry name" value="PRK00033.1-3"/>
    <property type="match status" value="1"/>
</dbReference>
<dbReference type="NCBIfam" id="NF000672">
    <property type="entry name" value="PRK00033.1-5"/>
    <property type="match status" value="1"/>
</dbReference>
<dbReference type="PANTHER" id="PTHR33473:SF19">
    <property type="entry name" value="ATP-DEPENDENT CLP PROTEASE ADAPTER PROTEIN CLPS"/>
    <property type="match status" value="1"/>
</dbReference>
<dbReference type="PANTHER" id="PTHR33473">
    <property type="entry name" value="ATP-DEPENDENT CLP PROTEASE ADAPTER PROTEIN CLPS1, CHLOROPLASTIC"/>
    <property type="match status" value="1"/>
</dbReference>
<dbReference type="Pfam" id="PF02617">
    <property type="entry name" value="ClpS"/>
    <property type="match status" value="1"/>
</dbReference>
<dbReference type="SUPFAM" id="SSF54736">
    <property type="entry name" value="ClpS-like"/>
    <property type="match status" value="1"/>
</dbReference>
<proteinExistence type="inferred from homology"/>
<accession>A4TN41</accession>
<organism>
    <name type="scientific">Yersinia pestis (strain Pestoides F)</name>
    <dbReference type="NCBI Taxonomy" id="386656"/>
    <lineage>
        <taxon>Bacteria</taxon>
        <taxon>Pseudomonadati</taxon>
        <taxon>Pseudomonadota</taxon>
        <taxon>Gammaproteobacteria</taxon>
        <taxon>Enterobacterales</taxon>
        <taxon>Yersiniaceae</taxon>
        <taxon>Yersinia</taxon>
    </lineage>
</organism>
<name>CLPS_YERPP</name>
<feature type="chain" id="PRO_0000300737" description="ATP-dependent Clp protease adapter protein ClpS">
    <location>
        <begin position="1"/>
        <end position="106"/>
    </location>
</feature>
<comment type="function">
    <text evidence="1">Involved in the modulation of the specificity of the ClpAP-mediated ATP-dependent protein degradation.</text>
</comment>
<comment type="subunit">
    <text evidence="1">Binds to the N-terminal domain of the chaperone ClpA.</text>
</comment>
<comment type="similarity">
    <text evidence="1">Belongs to the ClpS family.</text>
</comment>
<protein>
    <recommendedName>
        <fullName evidence="1">ATP-dependent Clp protease adapter protein ClpS</fullName>
    </recommendedName>
</protein>
<reference key="1">
    <citation type="submission" date="2007-02" db="EMBL/GenBank/DDBJ databases">
        <title>Complete sequence of chromosome of Yersinia pestis Pestoides F.</title>
        <authorList>
            <consortium name="US DOE Joint Genome Institute"/>
            <person name="Copeland A."/>
            <person name="Lucas S."/>
            <person name="Lapidus A."/>
            <person name="Barry K."/>
            <person name="Detter J.C."/>
            <person name="Glavina del Rio T."/>
            <person name="Hammon N."/>
            <person name="Israni S."/>
            <person name="Dalin E."/>
            <person name="Tice H."/>
            <person name="Pitluck S."/>
            <person name="Di Bartolo G."/>
            <person name="Chain P."/>
            <person name="Malfatti S."/>
            <person name="Shin M."/>
            <person name="Vergez L."/>
            <person name="Schmutz J."/>
            <person name="Larimer F."/>
            <person name="Land M."/>
            <person name="Hauser L."/>
            <person name="Worsham P."/>
            <person name="Chu M."/>
            <person name="Bearden S."/>
            <person name="Garcia E."/>
            <person name="Richardson P."/>
        </authorList>
    </citation>
    <scope>NUCLEOTIDE SEQUENCE [LARGE SCALE GENOMIC DNA]</scope>
    <source>
        <strain>Pestoides F</strain>
    </source>
</reference>